<evidence type="ECO:0000255" key="1">
    <source>
        <dbReference type="HAMAP-Rule" id="MF_00301"/>
    </source>
</evidence>
<keyword id="KW-0028">Amino-acid biosynthesis</keyword>
<keyword id="KW-0067">ATP-binding</keyword>
<keyword id="KW-0418">Kinase</keyword>
<keyword id="KW-0547">Nucleotide-binding</keyword>
<keyword id="KW-1185">Reference proteome</keyword>
<keyword id="KW-0791">Threonine biosynthesis</keyword>
<keyword id="KW-0808">Transferase</keyword>
<sequence>MAVYTELAAETLEAFLGTYDIGTLVSFHGIAEGVENSNFLLRTTEGDFILTLFERRVNARELPWFLGLMQYLAGRGLNCPLPVSDRSGTALRSLADRPAAITTFLPGVSATQLDANLCLELGKVLARLHIAGEGYDAVRPNALSPAAWGPLLDSCGESGDELSPGLTAEVRKALQNVEAAWPATADLPRGQIHADLFPDNVFFQNGQVSGLIDFYFACTDFLAYDLAICLNAWCFRDEKTFEPSFAAAIMQGYESVRPLSDAEKAALPTLCQGAAIRFLLTRLYDWINTPADALVTRKDPLAYLRRLRHFQSASHV</sequence>
<comment type="catalytic activity">
    <reaction evidence="1">
        <text>L-homoserine + ATP = O-phospho-L-homoserine + ADP + H(+)</text>
        <dbReference type="Rhea" id="RHEA:13985"/>
        <dbReference type="ChEBI" id="CHEBI:15378"/>
        <dbReference type="ChEBI" id="CHEBI:30616"/>
        <dbReference type="ChEBI" id="CHEBI:57476"/>
        <dbReference type="ChEBI" id="CHEBI:57590"/>
        <dbReference type="ChEBI" id="CHEBI:456216"/>
        <dbReference type="EC" id="2.7.1.39"/>
    </reaction>
</comment>
<comment type="pathway">
    <text evidence="1">Amino-acid biosynthesis; L-threonine biosynthesis; L-threonine from L-aspartate: step 4/5.</text>
</comment>
<comment type="similarity">
    <text evidence="1">Belongs to the pseudomonas-type ThrB family.</text>
</comment>
<organism>
    <name type="scientific">Gluconobacter oxydans (strain 621H)</name>
    <name type="common">Gluconobacter suboxydans</name>
    <dbReference type="NCBI Taxonomy" id="290633"/>
    <lineage>
        <taxon>Bacteria</taxon>
        <taxon>Pseudomonadati</taxon>
        <taxon>Pseudomonadota</taxon>
        <taxon>Alphaproteobacteria</taxon>
        <taxon>Acetobacterales</taxon>
        <taxon>Acetobacteraceae</taxon>
        <taxon>Gluconobacter</taxon>
    </lineage>
</organism>
<dbReference type="EC" id="2.7.1.39" evidence="1"/>
<dbReference type="EMBL" id="CP000009">
    <property type="protein sequence ID" value="AAW59968.1"/>
    <property type="molecule type" value="Genomic_DNA"/>
</dbReference>
<dbReference type="RefSeq" id="WP_011251771.1">
    <property type="nucleotide sequence ID" value="NC_006677.1"/>
</dbReference>
<dbReference type="SMR" id="Q5FUH8"/>
<dbReference type="STRING" id="290633.GOX0178"/>
<dbReference type="KEGG" id="gox:GOX0178"/>
<dbReference type="eggNOG" id="COG2334">
    <property type="taxonomic scope" value="Bacteria"/>
</dbReference>
<dbReference type="HOGENOM" id="CLU_053300_1_0_5"/>
<dbReference type="UniPathway" id="UPA00050">
    <property type="reaction ID" value="UER00064"/>
</dbReference>
<dbReference type="Proteomes" id="UP000006375">
    <property type="component" value="Chromosome"/>
</dbReference>
<dbReference type="GO" id="GO:0005524">
    <property type="term" value="F:ATP binding"/>
    <property type="evidence" value="ECO:0007669"/>
    <property type="project" value="UniProtKB-KW"/>
</dbReference>
<dbReference type="GO" id="GO:0004413">
    <property type="term" value="F:homoserine kinase activity"/>
    <property type="evidence" value="ECO:0007669"/>
    <property type="project" value="UniProtKB-UniRule"/>
</dbReference>
<dbReference type="GO" id="GO:0009088">
    <property type="term" value="P:threonine biosynthetic process"/>
    <property type="evidence" value="ECO:0007669"/>
    <property type="project" value="UniProtKB-UniRule"/>
</dbReference>
<dbReference type="CDD" id="cd05153">
    <property type="entry name" value="HomoserineK_II"/>
    <property type="match status" value="1"/>
</dbReference>
<dbReference type="Gene3D" id="3.90.1200.10">
    <property type="match status" value="1"/>
</dbReference>
<dbReference type="Gene3D" id="3.30.200.20">
    <property type="entry name" value="Phosphorylase Kinase, domain 1"/>
    <property type="match status" value="1"/>
</dbReference>
<dbReference type="HAMAP" id="MF_00301">
    <property type="entry name" value="Homoser_kinase_2"/>
    <property type="match status" value="1"/>
</dbReference>
<dbReference type="InterPro" id="IPR002575">
    <property type="entry name" value="Aminoglycoside_PTrfase"/>
</dbReference>
<dbReference type="InterPro" id="IPR005280">
    <property type="entry name" value="Homoserine_kinase_II"/>
</dbReference>
<dbReference type="InterPro" id="IPR011009">
    <property type="entry name" value="Kinase-like_dom_sf"/>
</dbReference>
<dbReference type="InterPro" id="IPR050249">
    <property type="entry name" value="Pseudomonas-type_ThrB"/>
</dbReference>
<dbReference type="NCBIfam" id="NF003558">
    <property type="entry name" value="PRK05231.1"/>
    <property type="match status" value="1"/>
</dbReference>
<dbReference type="NCBIfam" id="TIGR00938">
    <property type="entry name" value="thrB_alt"/>
    <property type="match status" value="1"/>
</dbReference>
<dbReference type="PANTHER" id="PTHR21064:SF6">
    <property type="entry name" value="AMINOGLYCOSIDE PHOSPHOTRANSFERASE DOMAIN-CONTAINING PROTEIN"/>
    <property type="match status" value="1"/>
</dbReference>
<dbReference type="PANTHER" id="PTHR21064">
    <property type="entry name" value="AMINOGLYCOSIDE PHOSPHOTRANSFERASE DOMAIN-CONTAINING PROTEIN-RELATED"/>
    <property type="match status" value="1"/>
</dbReference>
<dbReference type="Pfam" id="PF01636">
    <property type="entry name" value="APH"/>
    <property type="match status" value="1"/>
</dbReference>
<dbReference type="SUPFAM" id="SSF56112">
    <property type="entry name" value="Protein kinase-like (PK-like)"/>
    <property type="match status" value="1"/>
</dbReference>
<proteinExistence type="inferred from homology"/>
<gene>
    <name evidence="1" type="primary">thrB</name>
    <name type="ordered locus">GOX0178</name>
</gene>
<reference key="1">
    <citation type="journal article" date="2005" name="Nat. Biotechnol.">
        <title>Complete genome sequence of the acetic acid bacterium Gluconobacter oxydans.</title>
        <authorList>
            <person name="Prust C."/>
            <person name="Hoffmeister M."/>
            <person name="Liesegang H."/>
            <person name="Wiezer A."/>
            <person name="Fricke W.F."/>
            <person name="Ehrenreich A."/>
            <person name="Gottschalk G."/>
            <person name="Deppenmeier U."/>
        </authorList>
    </citation>
    <scope>NUCLEOTIDE SEQUENCE [LARGE SCALE GENOMIC DNA]</scope>
    <source>
        <strain>621H</strain>
    </source>
</reference>
<protein>
    <recommendedName>
        <fullName evidence="1">Homoserine kinase</fullName>
        <shortName evidence="1">HK</shortName>
        <shortName evidence="1">HSK</shortName>
        <ecNumber evidence="1">2.7.1.39</ecNumber>
    </recommendedName>
</protein>
<feature type="chain" id="PRO_1000022581" description="Homoserine kinase">
    <location>
        <begin position="1"/>
        <end position="316"/>
    </location>
</feature>
<name>KHSE_GLUOX</name>
<accession>Q5FUH8</accession>